<sequence>MEQVTLTSDGTSSVFAENTVREVCNINYWGMRYYNVDEKGDIFVCPDPDKPQNRVSLAALAEKVQREQGAHLPTLFCFPQIIQHRLRSINQAFKRAREDFGYEGNYFLVYPIKVNQHRRIVESLISSGQPLGLEAGSKAELMAVLAHAGITQTVIVCNGYKDREYVRFALMGEKLGHKVYLVIEKLSEIQLVLEEAAKLNVKPRLGVRARLASQGSGKWQSSGGEKSKFGLSASQVLSLVQMLKEHECLDCLQLLHFHLGSQLGNIRDVATGVRESARFYVELHKLGVNIQCFDVGGGLGVDYEGNRTQSDCSVNYGLNEYADTVVWGIGQACREHGLPHPTIITESGRGVTAHHAVLVSNVIGVERYKFETLAAPAKDAPSVLHSMWETWVDIQSSREKRSLRSWIHESQFDLSDVHNQYNVGLLNLEQRAWAEQLYLNICHEVGQLFNEKHRSHRTIIDELQERFADKLYVNFSLFQSLPDAWGIDQLFPVCPISNLNQPVSRRAVLLDITCDSDGTIDHYIDGDGITTTMPMPHYEEDNPPLLGFFMVGAYQEILGNMHNLFGDTSTVDVLVHEQDKAYIVDYDEGNTVADMLEYVYLDPKKLLDRYREQIEHSNLPASEAIQFLNELEVGLNGYTYLEDE</sequence>
<keyword id="KW-0210">Decarboxylase</keyword>
<keyword id="KW-0456">Lyase</keyword>
<keyword id="KW-0460">Magnesium</keyword>
<keyword id="KW-0479">Metal-binding</keyword>
<keyword id="KW-0620">Polyamine biosynthesis</keyword>
<keyword id="KW-0663">Pyridoxal phosphate</keyword>
<keyword id="KW-1185">Reference proteome</keyword>
<keyword id="KW-0745">Spermidine biosynthesis</keyword>
<proteinExistence type="inferred from homology"/>
<protein>
    <recommendedName>
        <fullName evidence="1">Biosynthetic arginine decarboxylase</fullName>
        <shortName evidence="1">ADC</shortName>
        <ecNumber evidence="1">4.1.1.19</ecNumber>
    </recommendedName>
</protein>
<reference key="1">
    <citation type="journal article" date="2001" name="Proc. Natl. Acad. Sci. U.S.A.">
        <title>Complete genomic sequence of Pasteurella multocida Pm70.</title>
        <authorList>
            <person name="May B.J."/>
            <person name="Zhang Q."/>
            <person name="Li L.L."/>
            <person name="Paustian M.L."/>
            <person name="Whittam T.S."/>
            <person name="Kapur V."/>
        </authorList>
    </citation>
    <scope>NUCLEOTIDE SEQUENCE [LARGE SCALE GENOMIC DNA]</scope>
    <source>
        <strain>Pm70</strain>
    </source>
</reference>
<accession>Q9CL60</accession>
<name>SPEA_PASMU</name>
<gene>
    <name evidence="1" type="primary">speA</name>
    <name type="ordered locus">PM1382</name>
</gene>
<dbReference type="EC" id="4.1.1.19" evidence="1"/>
<dbReference type="EMBL" id="AE004439">
    <property type="protein sequence ID" value="AAK03466.1"/>
    <property type="molecule type" value="Genomic_DNA"/>
</dbReference>
<dbReference type="RefSeq" id="WP_005757582.1">
    <property type="nucleotide sequence ID" value="NC_002663.1"/>
</dbReference>
<dbReference type="SMR" id="Q9CL60"/>
<dbReference type="STRING" id="272843.PM1382"/>
<dbReference type="EnsemblBacteria" id="AAK03466">
    <property type="protein sequence ID" value="AAK03466"/>
    <property type="gene ID" value="PM1382"/>
</dbReference>
<dbReference type="GeneID" id="77207059"/>
<dbReference type="KEGG" id="pmu:PM1382"/>
<dbReference type="PATRIC" id="fig|272843.6.peg.1394"/>
<dbReference type="HOGENOM" id="CLU_027243_1_0_6"/>
<dbReference type="OrthoDB" id="9802658at2"/>
<dbReference type="Proteomes" id="UP000000809">
    <property type="component" value="Chromosome"/>
</dbReference>
<dbReference type="GO" id="GO:0008792">
    <property type="term" value="F:arginine decarboxylase activity"/>
    <property type="evidence" value="ECO:0007669"/>
    <property type="project" value="UniProtKB-UniRule"/>
</dbReference>
<dbReference type="GO" id="GO:0046872">
    <property type="term" value="F:metal ion binding"/>
    <property type="evidence" value="ECO:0007669"/>
    <property type="project" value="UniProtKB-KW"/>
</dbReference>
<dbReference type="GO" id="GO:0006527">
    <property type="term" value="P:arginine catabolic process"/>
    <property type="evidence" value="ECO:0007669"/>
    <property type="project" value="InterPro"/>
</dbReference>
<dbReference type="GO" id="GO:0033388">
    <property type="term" value="P:putrescine biosynthetic process from arginine"/>
    <property type="evidence" value="ECO:0007669"/>
    <property type="project" value="TreeGrafter"/>
</dbReference>
<dbReference type="GO" id="GO:0008295">
    <property type="term" value="P:spermidine biosynthetic process"/>
    <property type="evidence" value="ECO:0007669"/>
    <property type="project" value="UniProtKB-UniRule"/>
</dbReference>
<dbReference type="CDD" id="cd06830">
    <property type="entry name" value="PLPDE_III_ADC"/>
    <property type="match status" value="1"/>
</dbReference>
<dbReference type="FunFam" id="1.10.287.3440:FF:000001">
    <property type="entry name" value="Biosynthetic arginine decarboxylase"/>
    <property type="match status" value="1"/>
</dbReference>
<dbReference type="FunFam" id="1.20.58.930:FF:000001">
    <property type="entry name" value="Biosynthetic arginine decarboxylase"/>
    <property type="match status" value="1"/>
</dbReference>
<dbReference type="FunFam" id="2.40.37.10:FF:000001">
    <property type="entry name" value="Biosynthetic arginine decarboxylase"/>
    <property type="match status" value="1"/>
</dbReference>
<dbReference type="FunFam" id="3.20.20.10:FF:000001">
    <property type="entry name" value="Biosynthetic arginine decarboxylase"/>
    <property type="match status" value="1"/>
</dbReference>
<dbReference type="Gene3D" id="1.10.287.3440">
    <property type="match status" value="1"/>
</dbReference>
<dbReference type="Gene3D" id="1.20.58.930">
    <property type="match status" value="1"/>
</dbReference>
<dbReference type="Gene3D" id="3.20.20.10">
    <property type="entry name" value="Alanine racemase"/>
    <property type="match status" value="1"/>
</dbReference>
<dbReference type="Gene3D" id="2.40.37.10">
    <property type="entry name" value="Lyase, Ornithine Decarboxylase, Chain A, domain 1"/>
    <property type="match status" value="1"/>
</dbReference>
<dbReference type="HAMAP" id="MF_01417">
    <property type="entry name" value="SpeA"/>
    <property type="match status" value="1"/>
</dbReference>
<dbReference type="InterPro" id="IPR009006">
    <property type="entry name" value="Ala_racemase/Decarboxylase_C"/>
</dbReference>
<dbReference type="InterPro" id="IPR040634">
    <property type="entry name" value="Arg_decarb_HB"/>
</dbReference>
<dbReference type="InterPro" id="IPR041128">
    <property type="entry name" value="Arg_decarbox_C"/>
</dbReference>
<dbReference type="InterPro" id="IPR002985">
    <property type="entry name" value="Arg_decrbxlase"/>
</dbReference>
<dbReference type="InterPro" id="IPR022657">
    <property type="entry name" value="De-COase2_CS"/>
</dbReference>
<dbReference type="InterPro" id="IPR022644">
    <property type="entry name" value="De-COase2_N"/>
</dbReference>
<dbReference type="InterPro" id="IPR022653">
    <property type="entry name" value="De-COase2_pyr-phos_BS"/>
</dbReference>
<dbReference type="InterPro" id="IPR000183">
    <property type="entry name" value="Orn/DAP/Arg_de-COase"/>
</dbReference>
<dbReference type="InterPro" id="IPR029066">
    <property type="entry name" value="PLP-binding_barrel"/>
</dbReference>
<dbReference type="NCBIfam" id="NF003763">
    <property type="entry name" value="PRK05354.1"/>
    <property type="match status" value="1"/>
</dbReference>
<dbReference type="NCBIfam" id="TIGR01273">
    <property type="entry name" value="speA"/>
    <property type="match status" value="1"/>
</dbReference>
<dbReference type="PANTHER" id="PTHR43295">
    <property type="entry name" value="ARGININE DECARBOXYLASE"/>
    <property type="match status" value="1"/>
</dbReference>
<dbReference type="PANTHER" id="PTHR43295:SF9">
    <property type="entry name" value="BIOSYNTHETIC ARGININE DECARBOXYLASE"/>
    <property type="match status" value="1"/>
</dbReference>
<dbReference type="Pfam" id="PF17810">
    <property type="entry name" value="Arg_decarb_HB"/>
    <property type="match status" value="1"/>
</dbReference>
<dbReference type="Pfam" id="PF17944">
    <property type="entry name" value="Arg_decarbox_C"/>
    <property type="match status" value="1"/>
</dbReference>
<dbReference type="Pfam" id="PF02784">
    <property type="entry name" value="Orn_Arg_deC_N"/>
    <property type="match status" value="1"/>
</dbReference>
<dbReference type="PIRSF" id="PIRSF001336">
    <property type="entry name" value="Arg_decrbxlase"/>
    <property type="match status" value="1"/>
</dbReference>
<dbReference type="PRINTS" id="PR01180">
    <property type="entry name" value="ARGDCRBXLASE"/>
</dbReference>
<dbReference type="PRINTS" id="PR01179">
    <property type="entry name" value="ODADCRBXLASE"/>
</dbReference>
<dbReference type="SUPFAM" id="SSF50621">
    <property type="entry name" value="Alanine racemase C-terminal domain-like"/>
    <property type="match status" value="1"/>
</dbReference>
<dbReference type="SUPFAM" id="SSF51419">
    <property type="entry name" value="PLP-binding barrel"/>
    <property type="match status" value="1"/>
</dbReference>
<dbReference type="PROSITE" id="PS00878">
    <property type="entry name" value="ODR_DC_2_1"/>
    <property type="match status" value="1"/>
</dbReference>
<dbReference type="PROSITE" id="PS00879">
    <property type="entry name" value="ODR_DC_2_2"/>
    <property type="match status" value="1"/>
</dbReference>
<organism>
    <name type="scientific">Pasteurella multocida (strain Pm70)</name>
    <dbReference type="NCBI Taxonomy" id="272843"/>
    <lineage>
        <taxon>Bacteria</taxon>
        <taxon>Pseudomonadati</taxon>
        <taxon>Pseudomonadota</taxon>
        <taxon>Gammaproteobacteria</taxon>
        <taxon>Pasteurellales</taxon>
        <taxon>Pasteurellaceae</taxon>
        <taxon>Pasteurella</taxon>
    </lineage>
</organism>
<feature type="chain" id="PRO_0000149966" description="Biosynthetic arginine decarboxylase">
    <location>
        <begin position="1"/>
        <end position="644"/>
    </location>
</feature>
<feature type="binding site" evidence="1">
    <location>
        <begin position="293"/>
        <end position="303"/>
    </location>
    <ligand>
        <name>substrate</name>
    </ligand>
</feature>
<feature type="modified residue" description="N6-(pyridoxal phosphate)lysine" evidence="1">
    <location>
        <position position="113"/>
    </location>
</feature>
<evidence type="ECO:0000255" key="1">
    <source>
        <dbReference type="HAMAP-Rule" id="MF_01417"/>
    </source>
</evidence>
<comment type="function">
    <text evidence="1">Catalyzes the biosynthesis of agmatine from arginine.</text>
</comment>
<comment type="catalytic activity">
    <reaction evidence="1">
        <text>L-arginine + H(+) = agmatine + CO2</text>
        <dbReference type="Rhea" id="RHEA:17641"/>
        <dbReference type="ChEBI" id="CHEBI:15378"/>
        <dbReference type="ChEBI" id="CHEBI:16526"/>
        <dbReference type="ChEBI" id="CHEBI:32682"/>
        <dbReference type="ChEBI" id="CHEBI:58145"/>
        <dbReference type="EC" id="4.1.1.19"/>
    </reaction>
</comment>
<comment type="cofactor">
    <cofactor evidence="1">
        <name>Mg(2+)</name>
        <dbReference type="ChEBI" id="CHEBI:18420"/>
    </cofactor>
</comment>
<comment type="cofactor">
    <cofactor evidence="1">
        <name>pyridoxal 5'-phosphate</name>
        <dbReference type="ChEBI" id="CHEBI:597326"/>
    </cofactor>
</comment>
<comment type="similarity">
    <text evidence="1">Belongs to the Orn/Lys/Arg decarboxylase class-II family. SpeA subfamily.</text>
</comment>